<evidence type="ECO:0000255" key="1">
    <source>
        <dbReference type="HAMAP-Rule" id="MF_00294"/>
    </source>
</evidence>
<evidence type="ECO:0000305" key="2"/>
<dbReference type="EMBL" id="CP001489">
    <property type="protein sequence ID" value="ACO02413.1"/>
    <property type="molecule type" value="Genomic_DNA"/>
</dbReference>
<dbReference type="RefSeq" id="WP_002966024.1">
    <property type="nucleotide sequence ID" value="NC_012442.1"/>
</dbReference>
<dbReference type="SMR" id="C0RLD0"/>
<dbReference type="GeneID" id="97535268"/>
<dbReference type="KEGG" id="bmi:BMEA_B0584"/>
<dbReference type="HOGENOM" id="CLU_190949_1_1_5"/>
<dbReference type="Proteomes" id="UP000001748">
    <property type="component" value="Chromosome II"/>
</dbReference>
<dbReference type="GO" id="GO:0022625">
    <property type="term" value="C:cytosolic large ribosomal subunit"/>
    <property type="evidence" value="ECO:0007669"/>
    <property type="project" value="TreeGrafter"/>
</dbReference>
<dbReference type="GO" id="GO:0003735">
    <property type="term" value="F:structural constituent of ribosome"/>
    <property type="evidence" value="ECO:0007669"/>
    <property type="project" value="InterPro"/>
</dbReference>
<dbReference type="GO" id="GO:0006412">
    <property type="term" value="P:translation"/>
    <property type="evidence" value="ECO:0007669"/>
    <property type="project" value="UniProtKB-UniRule"/>
</dbReference>
<dbReference type="Gene3D" id="2.20.28.120">
    <property type="entry name" value="Ribosomal protein L33"/>
    <property type="match status" value="1"/>
</dbReference>
<dbReference type="HAMAP" id="MF_00294">
    <property type="entry name" value="Ribosomal_bL33"/>
    <property type="match status" value="1"/>
</dbReference>
<dbReference type="InterPro" id="IPR001705">
    <property type="entry name" value="Ribosomal_bL33"/>
</dbReference>
<dbReference type="InterPro" id="IPR018264">
    <property type="entry name" value="Ribosomal_bL33_CS"/>
</dbReference>
<dbReference type="InterPro" id="IPR038584">
    <property type="entry name" value="Ribosomal_bL33_sf"/>
</dbReference>
<dbReference type="InterPro" id="IPR011332">
    <property type="entry name" value="Ribosomal_zn-bd"/>
</dbReference>
<dbReference type="NCBIfam" id="NF001860">
    <property type="entry name" value="PRK00595.1"/>
    <property type="match status" value="1"/>
</dbReference>
<dbReference type="NCBIfam" id="TIGR01023">
    <property type="entry name" value="rpmG_bact"/>
    <property type="match status" value="1"/>
</dbReference>
<dbReference type="PANTHER" id="PTHR15238">
    <property type="entry name" value="54S RIBOSOMAL PROTEIN L39, MITOCHONDRIAL"/>
    <property type="match status" value="1"/>
</dbReference>
<dbReference type="PANTHER" id="PTHR15238:SF1">
    <property type="entry name" value="LARGE RIBOSOMAL SUBUNIT PROTEIN BL33M"/>
    <property type="match status" value="1"/>
</dbReference>
<dbReference type="Pfam" id="PF00471">
    <property type="entry name" value="Ribosomal_L33"/>
    <property type="match status" value="1"/>
</dbReference>
<dbReference type="SUPFAM" id="SSF57829">
    <property type="entry name" value="Zn-binding ribosomal proteins"/>
    <property type="match status" value="1"/>
</dbReference>
<dbReference type="PROSITE" id="PS00582">
    <property type="entry name" value="RIBOSOMAL_L33"/>
    <property type="match status" value="1"/>
</dbReference>
<name>RL33_BRUMB</name>
<gene>
    <name evidence="1" type="primary">rpmG</name>
    <name type="ordered locus">BMEA_B0584</name>
</gene>
<feature type="chain" id="PRO_1000204903" description="Large ribosomal subunit protein bL33">
    <location>
        <begin position="1"/>
        <end position="55"/>
    </location>
</feature>
<sequence length="55" mass="6400">MAKATTIKIKLLSTADTGFFYVTKKNSRTMTEKMTKTKYDPIARKHVEFKETKIK</sequence>
<accession>C0RLD0</accession>
<reference key="1">
    <citation type="submission" date="2009-03" db="EMBL/GenBank/DDBJ databases">
        <title>Brucella melitensis ATCC 23457 whole genome shotgun sequencing project.</title>
        <authorList>
            <person name="Setubal J.C."/>
            <person name="Boyle S."/>
            <person name="Crasta O.R."/>
            <person name="Gillespie J.J."/>
            <person name="Kenyon R.W."/>
            <person name="Lu J."/>
            <person name="Mane S."/>
            <person name="Nagrani S."/>
            <person name="Shallom J.M."/>
            <person name="Shallom S."/>
            <person name="Shukla M."/>
            <person name="Snyder E.E."/>
            <person name="Sobral B.W."/>
            <person name="Wattam A.R."/>
            <person name="Will R."/>
            <person name="Williams K."/>
            <person name="Yoo H."/>
            <person name="Munk C."/>
            <person name="Tapia R."/>
            <person name="Han C."/>
            <person name="Detter J.C."/>
            <person name="Bruce D."/>
            <person name="Brettin T.S."/>
        </authorList>
    </citation>
    <scope>NUCLEOTIDE SEQUENCE [LARGE SCALE GENOMIC DNA]</scope>
    <source>
        <strain>ATCC 23457</strain>
    </source>
</reference>
<organism>
    <name type="scientific">Brucella melitensis biotype 2 (strain ATCC 23457)</name>
    <dbReference type="NCBI Taxonomy" id="546272"/>
    <lineage>
        <taxon>Bacteria</taxon>
        <taxon>Pseudomonadati</taxon>
        <taxon>Pseudomonadota</taxon>
        <taxon>Alphaproteobacteria</taxon>
        <taxon>Hyphomicrobiales</taxon>
        <taxon>Brucellaceae</taxon>
        <taxon>Brucella/Ochrobactrum group</taxon>
        <taxon>Brucella</taxon>
    </lineage>
</organism>
<proteinExistence type="inferred from homology"/>
<protein>
    <recommendedName>
        <fullName evidence="1">Large ribosomal subunit protein bL33</fullName>
    </recommendedName>
    <alternativeName>
        <fullName evidence="2">50S ribosomal protein L33</fullName>
    </alternativeName>
</protein>
<comment type="similarity">
    <text evidence="1">Belongs to the bacterial ribosomal protein bL33 family.</text>
</comment>
<keyword id="KW-0687">Ribonucleoprotein</keyword>
<keyword id="KW-0689">Ribosomal protein</keyword>